<reference key="1">
    <citation type="journal article" date="2005" name="J. Infect. Dis.">
        <title>Genome sequence of a serotype M28 strain of group A Streptococcus: potential new insights into puerperal sepsis and bacterial disease specificity.</title>
        <authorList>
            <person name="Green N.M."/>
            <person name="Zhang S."/>
            <person name="Porcella S.F."/>
            <person name="Nagiec M.J."/>
            <person name="Barbian K.D."/>
            <person name="Beres S.B."/>
            <person name="Lefebvre R.B."/>
            <person name="Musser J.M."/>
        </authorList>
    </citation>
    <scope>NUCLEOTIDE SEQUENCE [LARGE SCALE GENOMIC DNA]</scope>
    <source>
        <strain>MGAS6180</strain>
    </source>
</reference>
<protein>
    <recommendedName>
        <fullName evidence="1">Glutamate 5-kinase</fullName>
        <ecNumber evidence="1">2.7.2.11</ecNumber>
    </recommendedName>
    <alternativeName>
        <fullName evidence="1">Gamma-glutamyl kinase</fullName>
        <shortName evidence="1">GK</shortName>
    </alternativeName>
</protein>
<name>PROB_STRPM</name>
<dbReference type="EC" id="2.7.2.11" evidence="1"/>
<dbReference type="EMBL" id="CP000056">
    <property type="protein sequence ID" value="AAX72524.1"/>
    <property type="status" value="ALT_INIT"/>
    <property type="molecule type" value="Genomic_DNA"/>
</dbReference>
<dbReference type="SMR" id="Q48RY6"/>
<dbReference type="KEGG" id="spb:M28_Spy1414"/>
<dbReference type="HOGENOM" id="CLU_025400_0_2_9"/>
<dbReference type="UniPathway" id="UPA00098">
    <property type="reaction ID" value="UER00359"/>
</dbReference>
<dbReference type="GO" id="GO:0005829">
    <property type="term" value="C:cytosol"/>
    <property type="evidence" value="ECO:0007669"/>
    <property type="project" value="TreeGrafter"/>
</dbReference>
<dbReference type="GO" id="GO:0005524">
    <property type="term" value="F:ATP binding"/>
    <property type="evidence" value="ECO:0007669"/>
    <property type="project" value="UniProtKB-KW"/>
</dbReference>
<dbReference type="GO" id="GO:0004349">
    <property type="term" value="F:glutamate 5-kinase activity"/>
    <property type="evidence" value="ECO:0007669"/>
    <property type="project" value="UniProtKB-UniRule"/>
</dbReference>
<dbReference type="GO" id="GO:0055129">
    <property type="term" value="P:L-proline biosynthetic process"/>
    <property type="evidence" value="ECO:0007669"/>
    <property type="project" value="UniProtKB-UniRule"/>
</dbReference>
<dbReference type="CDD" id="cd04242">
    <property type="entry name" value="AAK_G5K_ProB"/>
    <property type="match status" value="1"/>
</dbReference>
<dbReference type="FunFam" id="3.40.1160.10:FF:000006">
    <property type="entry name" value="Glutamate 5-kinase"/>
    <property type="match status" value="1"/>
</dbReference>
<dbReference type="Gene3D" id="3.40.1160.10">
    <property type="entry name" value="Acetylglutamate kinase-like"/>
    <property type="match status" value="1"/>
</dbReference>
<dbReference type="HAMAP" id="MF_00456">
    <property type="entry name" value="ProB"/>
    <property type="match status" value="1"/>
</dbReference>
<dbReference type="InterPro" id="IPR036393">
    <property type="entry name" value="AceGlu_kinase-like_sf"/>
</dbReference>
<dbReference type="InterPro" id="IPR001048">
    <property type="entry name" value="Asp/Glu/Uridylate_kinase"/>
</dbReference>
<dbReference type="InterPro" id="IPR041739">
    <property type="entry name" value="G5K_ProB"/>
</dbReference>
<dbReference type="InterPro" id="IPR001057">
    <property type="entry name" value="Glu/AcGlu_kinase"/>
</dbReference>
<dbReference type="InterPro" id="IPR011529">
    <property type="entry name" value="Glu_5kinase"/>
</dbReference>
<dbReference type="InterPro" id="IPR005715">
    <property type="entry name" value="Glu_5kinase/COase_Synthase"/>
</dbReference>
<dbReference type="InterPro" id="IPR019797">
    <property type="entry name" value="Glutamate_5-kinase_CS"/>
</dbReference>
<dbReference type="NCBIfam" id="TIGR01027">
    <property type="entry name" value="proB"/>
    <property type="match status" value="1"/>
</dbReference>
<dbReference type="PANTHER" id="PTHR43654">
    <property type="entry name" value="GLUTAMATE 5-KINASE"/>
    <property type="match status" value="1"/>
</dbReference>
<dbReference type="PANTHER" id="PTHR43654:SF1">
    <property type="entry name" value="ISOPENTENYL PHOSPHATE KINASE"/>
    <property type="match status" value="1"/>
</dbReference>
<dbReference type="Pfam" id="PF00696">
    <property type="entry name" value="AA_kinase"/>
    <property type="match status" value="1"/>
</dbReference>
<dbReference type="PIRSF" id="PIRSF000729">
    <property type="entry name" value="GK"/>
    <property type="match status" value="1"/>
</dbReference>
<dbReference type="PRINTS" id="PR00474">
    <property type="entry name" value="GLU5KINASE"/>
</dbReference>
<dbReference type="SUPFAM" id="SSF53633">
    <property type="entry name" value="Carbamate kinase-like"/>
    <property type="match status" value="1"/>
</dbReference>
<dbReference type="PROSITE" id="PS00902">
    <property type="entry name" value="GLUTAMATE_5_KINASE"/>
    <property type="match status" value="1"/>
</dbReference>
<keyword id="KW-0028">Amino-acid biosynthesis</keyword>
<keyword id="KW-0067">ATP-binding</keyword>
<keyword id="KW-0963">Cytoplasm</keyword>
<keyword id="KW-0418">Kinase</keyword>
<keyword id="KW-0547">Nucleotide-binding</keyword>
<keyword id="KW-0641">Proline biosynthesis</keyword>
<keyword id="KW-0808">Transferase</keyword>
<evidence type="ECO:0000255" key="1">
    <source>
        <dbReference type="HAMAP-Rule" id="MF_00456"/>
    </source>
</evidence>
<evidence type="ECO:0000305" key="2"/>
<organism>
    <name type="scientific">Streptococcus pyogenes serotype M28 (strain MGAS6180)</name>
    <dbReference type="NCBI Taxonomy" id="319701"/>
    <lineage>
        <taxon>Bacteria</taxon>
        <taxon>Bacillati</taxon>
        <taxon>Bacillota</taxon>
        <taxon>Bacilli</taxon>
        <taxon>Lactobacillales</taxon>
        <taxon>Streptococcaceae</taxon>
        <taxon>Streptococcus</taxon>
    </lineage>
</organism>
<gene>
    <name evidence="1" type="primary">proB</name>
    <name type="ordered locus">M28_Spy1414</name>
</gene>
<accession>Q48RY6</accession>
<proteinExistence type="inferred from homology"/>
<comment type="function">
    <text evidence="1">Catalyzes the transfer of a phosphate group to glutamate to form L-glutamate 5-phosphate.</text>
</comment>
<comment type="catalytic activity">
    <reaction evidence="1">
        <text>L-glutamate + ATP = L-glutamyl 5-phosphate + ADP</text>
        <dbReference type="Rhea" id="RHEA:14877"/>
        <dbReference type="ChEBI" id="CHEBI:29985"/>
        <dbReference type="ChEBI" id="CHEBI:30616"/>
        <dbReference type="ChEBI" id="CHEBI:58274"/>
        <dbReference type="ChEBI" id="CHEBI:456216"/>
        <dbReference type="EC" id="2.7.2.11"/>
    </reaction>
</comment>
<comment type="pathway">
    <text evidence="1">Amino-acid biosynthesis; L-proline biosynthesis; L-glutamate 5-semialdehyde from L-glutamate: step 1/2.</text>
</comment>
<comment type="subcellular location">
    <subcellularLocation>
        <location evidence="1">Cytoplasm</location>
    </subcellularLocation>
</comment>
<comment type="similarity">
    <text evidence="1">Belongs to the glutamate 5-kinase family.</text>
</comment>
<comment type="sequence caution" evidence="2">
    <conflict type="erroneous initiation">
        <sequence resource="EMBL-CDS" id="AAX72524"/>
    </conflict>
</comment>
<sequence length="272" mass="29543">MKRQFEDVTRIVIKIGTSSLVLPTGKINLEKIDQLAFVISSLMNKGKEVILVSSGAMGFGLDILKMEKRPTNLAKQQAVSSVGQVAMMSLYSQIFAHYQTNVSQILLTRDVVVFPESLANVTNAFESLISLGIVPIVNENDAVSVDEMDHATKFGDNDRLSAVVAGITKADLLIMLSDIDGLFDKNPTIYEDAQLRSHVAVITQEIIASAGGAGSKFGTGGMLSKIQSAQMVFENKGQMVLMNGANPRDILRVLEGQPLGTWFKQIEEVTHD</sequence>
<feature type="chain" id="PRO_0000230069" description="Glutamate 5-kinase">
    <location>
        <begin position="1"/>
        <end position="272"/>
    </location>
</feature>
<feature type="binding site" evidence="1">
    <location>
        <position position="14"/>
    </location>
    <ligand>
        <name>ATP</name>
        <dbReference type="ChEBI" id="CHEBI:30616"/>
    </ligand>
</feature>
<feature type="binding site" evidence="1">
    <location>
        <position position="54"/>
    </location>
    <ligand>
        <name>substrate</name>
    </ligand>
</feature>
<feature type="binding site" evidence="1">
    <location>
        <position position="141"/>
    </location>
    <ligand>
        <name>substrate</name>
    </ligand>
</feature>
<feature type="binding site" evidence="1">
    <location>
        <position position="157"/>
    </location>
    <ligand>
        <name>substrate</name>
    </ligand>
</feature>
<feature type="binding site" evidence="1">
    <location>
        <begin position="177"/>
        <end position="178"/>
    </location>
    <ligand>
        <name>ATP</name>
        <dbReference type="ChEBI" id="CHEBI:30616"/>
    </ligand>
</feature>
<feature type="binding site" evidence="1">
    <location>
        <begin position="219"/>
        <end position="225"/>
    </location>
    <ligand>
        <name>ATP</name>
        <dbReference type="ChEBI" id="CHEBI:30616"/>
    </ligand>
</feature>